<keyword id="KW-0687">Ribonucleoprotein</keyword>
<keyword id="KW-0689">Ribosomal protein</keyword>
<keyword id="KW-0694">RNA-binding</keyword>
<keyword id="KW-0699">rRNA-binding</keyword>
<protein>
    <recommendedName>
        <fullName evidence="1">Large ribosomal subunit protein uL6</fullName>
    </recommendedName>
    <alternativeName>
        <fullName evidence="2">50S ribosomal protein L6</fullName>
    </alternativeName>
</protein>
<name>RL6_PSEPF</name>
<feature type="chain" id="PRO_0000260921" description="Large ribosomal subunit protein uL6">
    <location>
        <begin position="1"/>
        <end position="177"/>
    </location>
</feature>
<sequence length="177" mass="19196">MSRVAKNPVKLPAGVEVKFAGQQLSVKGAKGTLELNVHSSVEVVEEAGELRFAARNGDQQTRAMAGTTRALVNNMVQGVSQGFERKLQLVGVGYKAQAKGQVLNLALGFSHPVDYELPEGITAETPSQTDILIKGIDKQLVGQVAAEIRDFRPPEPYKGKGVRYADEVVRRKEAKKK</sequence>
<organism>
    <name type="scientific">Pseudomonas fluorescens (strain Pf0-1)</name>
    <dbReference type="NCBI Taxonomy" id="205922"/>
    <lineage>
        <taxon>Bacteria</taxon>
        <taxon>Pseudomonadati</taxon>
        <taxon>Pseudomonadota</taxon>
        <taxon>Gammaproteobacteria</taxon>
        <taxon>Pseudomonadales</taxon>
        <taxon>Pseudomonadaceae</taxon>
        <taxon>Pseudomonas</taxon>
    </lineage>
</organism>
<dbReference type="EMBL" id="CP000094">
    <property type="protein sequence ID" value="ABA76801.1"/>
    <property type="molecule type" value="Genomic_DNA"/>
</dbReference>
<dbReference type="RefSeq" id="WP_011336170.1">
    <property type="nucleotide sequence ID" value="NC_007492.2"/>
</dbReference>
<dbReference type="SMR" id="Q3K603"/>
<dbReference type="KEGG" id="pfo:Pfl01_5064"/>
<dbReference type="eggNOG" id="COG0097">
    <property type="taxonomic scope" value="Bacteria"/>
</dbReference>
<dbReference type="HOGENOM" id="CLU_065464_1_2_6"/>
<dbReference type="Proteomes" id="UP000002704">
    <property type="component" value="Chromosome"/>
</dbReference>
<dbReference type="GO" id="GO:0022625">
    <property type="term" value="C:cytosolic large ribosomal subunit"/>
    <property type="evidence" value="ECO:0007669"/>
    <property type="project" value="TreeGrafter"/>
</dbReference>
<dbReference type="GO" id="GO:0019843">
    <property type="term" value="F:rRNA binding"/>
    <property type="evidence" value="ECO:0007669"/>
    <property type="project" value="UniProtKB-UniRule"/>
</dbReference>
<dbReference type="GO" id="GO:0003735">
    <property type="term" value="F:structural constituent of ribosome"/>
    <property type="evidence" value="ECO:0007669"/>
    <property type="project" value="InterPro"/>
</dbReference>
<dbReference type="GO" id="GO:0002181">
    <property type="term" value="P:cytoplasmic translation"/>
    <property type="evidence" value="ECO:0007669"/>
    <property type="project" value="TreeGrafter"/>
</dbReference>
<dbReference type="FunFam" id="3.90.930.12:FF:000001">
    <property type="entry name" value="50S ribosomal protein L6"/>
    <property type="match status" value="1"/>
</dbReference>
<dbReference type="FunFam" id="3.90.930.12:FF:000002">
    <property type="entry name" value="50S ribosomal protein L6"/>
    <property type="match status" value="1"/>
</dbReference>
<dbReference type="Gene3D" id="3.90.930.12">
    <property type="entry name" value="Ribosomal protein L6, alpha-beta domain"/>
    <property type="match status" value="2"/>
</dbReference>
<dbReference type="HAMAP" id="MF_01365_B">
    <property type="entry name" value="Ribosomal_uL6_B"/>
    <property type="match status" value="1"/>
</dbReference>
<dbReference type="InterPro" id="IPR000702">
    <property type="entry name" value="Ribosomal_uL6-like"/>
</dbReference>
<dbReference type="InterPro" id="IPR036789">
    <property type="entry name" value="Ribosomal_uL6-like_a/b-dom_sf"/>
</dbReference>
<dbReference type="InterPro" id="IPR020040">
    <property type="entry name" value="Ribosomal_uL6_a/b-dom"/>
</dbReference>
<dbReference type="InterPro" id="IPR019906">
    <property type="entry name" value="Ribosomal_uL6_bac-type"/>
</dbReference>
<dbReference type="InterPro" id="IPR002358">
    <property type="entry name" value="Ribosomal_uL6_CS"/>
</dbReference>
<dbReference type="NCBIfam" id="TIGR03654">
    <property type="entry name" value="L6_bact"/>
    <property type="match status" value="1"/>
</dbReference>
<dbReference type="PANTHER" id="PTHR11655">
    <property type="entry name" value="60S/50S RIBOSOMAL PROTEIN L6/L9"/>
    <property type="match status" value="1"/>
</dbReference>
<dbReference type="PANTHER" id="PTHR11655:SF14">
    <property type="entry name" value="LARGE RIBOSOMAL SUBUNIT PROTEIN UL6M"/>
    <property type="match status" value="1"/>
</dbReference>
<dbReference type="Pfam" id="PF00347">
    <property type="entry name" value="Ribosomal_L6"/>
    <property type="match status" value="2"/>
</dbReference>
<dbReference type="PIRSF" id="PIRSF002162">
    <property type="entry name" value="Ribosomal_L6"/>
    <property type="match status" value="1"/>
</dbReference>
<dbReference type="PRINTS" id="PR00059">
    <property type="entry name" value="RIBOSOMALL6"/>
</dbReference>
<dbReference type="SUPFAM" id="SSF56053">
    <property type="entry name" value="Ribosomal protein L6"/>
    <property type="match status" value="2"/>
</dbReference>
<dbReference type="PROSITE" id="PS00525">
    <property type="entry name" value="RIBOSOMAL_L6_1"/>
    <property type="match status" value="1"/>
</dbReference>
<comment type="function">
    <text evidence="1">This protein binds to the 23S rRNA, and is important in its secondary structure. It is located near the subunit interface in the base of the L7/L12 stalk, and near the tRNA binding site of the peptidyltransferase center.</text>
</comment>
<comment type="subunit">
    <text evidence="1">Part of the 50S ribosomal subunit.</text>
</comment>
<comment type="similarity">
    <text evidence="1">Belongs to the universal ribosomal protein uL6 family.</text>
</comment>
<gene>
    <name evidence="1" type="primary">rplF</name>
    <name type="ordered locus">Pfl01_5064</name>
</gene>
<accession>Q3K603</accession>
<reference key="1">
    <citation type="journal article" date="2009" name="Genome Biol.">
        <title>Genomic and genetic analyses of diversity and plant interactions of Pseudomonas fluorescens.</title>
        <authorList>
            <person name="Silby M.W."/>
            <person name="Cerdeno-Tarraga A.M."/>
            <person name="Vernikos G.S."/>
            <person name="Giddens S.R."/>
            <person name="Jackson R.W."/>
            <person name="Preston G.M."/>
            <person name="Zhang X.-X."/>
            <person name="Moon C.D."/>
            <person name="Gehrig S.M."/>
            <person name="Godfrey S.A.C."/>
            <person name="Knight C.G."/>
            <person name="Malone J.G."/>
            <person name="Robinson Z."/>
            <person name="Spiers A.J."/>
            <person name="Harris S."/>
            <person name="Challis G.L."/>
            <person name="Yaxley A.M."/>
            <person name="Harris D."/>
            <person name="Seeger K."/>
            <person name="Murphy L."/>
            <person name="Rutter S."/>
            <person name="Squares R."/>
            <person name="Quail M.A."/>
            <person name="Saunders E."/>
            <person name="Mavromatis K."/>
            <person name="Brettin T.S."/>
            <person name="Bentley S.D."/>
            <person name="Hothersall J."/>
            <person name="Stephens E."/>
            <person name="Thomas C.M."/>
            <person name="Parkhill J."/>
            <person name="Levy S.B."/>
            <person name="Rainey P.B."/>
            <person name="Thomson N.R."/>
        </authorList>
    </citation>
    <scope>NUCLEOTIDE SEQUENCE [LARGE SCALE GENOMIC DNA]</scope>
    <source>
        <strain>Pf0-1</strain>
    </source>
</reference>
<evidence type="ECO:0000255" key="1">
    <source>
        <dbReference type="HAMAP-Rule" id="MF_01365"/>
    </source>
</evidence>
<evidence type="ECO:0000305" key="2"/>
<proteinExistence type="inferred from homology"/>